<dbReference type="EC" id="4.2.1.20" evidence="1"/>
<dbReference type="EMBL" id="BX640433">
    <property type="protein sequence ID" value="CAE38608.1"/>
    <property type="molecule type" value="Genomic_DNA"/>
</dbReference>
<dbReference type="RefSeq" id="WP_003813845.1">
    <property type="nucleotide sequence ID" value="NC_002928.3"/>
</dbReference>
<dbReference type="SMR" id="Q7W5G8"/>
<dbReference type="GeneID" id="56477743"/>
<dbReference type="KEGG" id="bpa:BPP3323"/>
<dbReference type="HOGENOM" id="CLU_016734_3_1_4"/>
<dbReference type="UniPathway" id="UPA00035">
    <property type="reaction ID" value="UER00044"/>
</dbReference>
<dbReference type="Proteomes" id="UP000001421">
    <property type="component" value="Chromosome"/>
</dbReference>
<dbReference type="GO" id="GO:0005737">
    <property type="term" value="C:cytoplasm"/>
    <property type="evidence" value="ECO:0007669"/>
    <property type="project" value="TreeGrafter"/>
</dbReference>
<dbReference type="GO" id="GO:0004834">
    <property type="term" value="F:tryptophan synthase activity"/>
    <property type="evidence" value="ECO:0007669"/>
    <property type="project" value="UniProtKB-UniRule"/>
</dbReference>
<dbReference type="CDD" id="cd06446">
    <property type="entry name" value="Trp-synth_B"/>
    <property type="match status" value="1"/>
</dbReference>
<dbReference type="FunFam" id="3.40.50.1100:FF:000001">
    <property type="entry name" value="Tryptophan synthase beta chain"/>
    <property type="match status" value="1"/>
</dbReference>
<dbReference type="FunFam" id="3.40.50.1100:FF:000004">
    <property type="entry name" value="Tryptophan synthase beta chain"/>
    <property type="match status" value="1"/>
</dbReference>
<dbReference type="Gene3D" id="3.40.50.1100">
    <property type="match status" value="2"/>
</dbReference>
<dbReference type="HAMAP" id="MF_00133">
    <property type="entry name" value="Trp_synth_beta"/>
    <property type="match status" value="1"/>
</dbReference>
<dbReference type="InterPro" id="IPR006653">
    <property type="entry name" value="Trp_synth_b_CS"/>
</dbReference>
<dbReference type="InterPro" id="IPR006654">
    <property type="entry name" value="Trp_synth_beta"/>
</dbReference>
<dbReference type="InterPro" id="IPR023026">
    <property type="entry name" value="Trp_synth_beta/beta-like"/>
</dbReference>
<dbReference type="InterPro" id="IPR001926">
    <property type="entry name" value="TrpB-like_PALP"/>
</dbReference>
<dbReference type="InterPro" id="IPR036052">
    <property type="entry name" value="TrpB-like_PALP_sf"/>
</dbReference>
<dbReference type="NCBIfam" id="TIGR00263">
    <property type="entry name" value="trpB"/>
    <property type="match status" value="1"/>
</dbReference>
<dbReference type="PANTHER" id="PTHR48077:SF3">
    <property type="entry name" value="TRYPTOPHAN SYNTHASE"/>
    <property type="match status" value="1"/>
</dbReference>
<dbReference type="PANTHER" id="PTHR48077">
    <property type="entry name" value="TRYPTOPHAN SYNTHASE-RELATED"/>
    <property type="match status" value="1"/>
</dbReference>
<dbReference type="Pfam" id="PF00291">
    <property type="entry name" value="PALP"/>
    <property type="match status" value="1"/>
</dbReference>
<dbReference type="PIRSF" id="PIRSF001413">
    <property type="entry name" value="Trp_syn_beta"/>
    <property type="match status" value="1"/>
</dbReference>
<dbReference type="SUPFAM" id="SSF53686">
    <property type="entry name" value="Tryptophan synthase beta subunit-like PLP-dependent enzymes"/>
    <property type="match status" value="1"/>
</dbReference>
<dbReference type="PROSITE" id="PS00168">
    <property type="entry name" value="TRP_SYNTHASE_BETA"/>
    <property type="match status" value="1"/>
</dbReference>
<evidence type="ECO:0000255" key="1">
    <source>
        <dbReference type="HAMAP-Rule" id="MF_00133"/>
    </source>
</evidence>
<feature type="chain" id="PRO_0000098921" description="Tryptophan synthase beta chain">
    <location>
        <begin position="1"/>
        <end position="399"/>
    </location>
</feature>
<feature type="modified residue" description="N6-(pyridoxal phosphate)lysine" evidence="1">
    <location>
        <position position="92"/>
    </location>
</feature>
<comment type="function">
    <text evidence="1">The beta subunit is responsible for the synthesis of L-tryptophan from indole and L-serine.</text>
</comment>
<comment type="catalytic activity">
    <reaction evidence="1">
        <text>(1S,2R)-1-C-(indol-3-yl)glycerol 3-phosphate + L-serine = D-glyceraldehyde 3-phosphate + L-tryptophan + H2O</text>
        <dbReference type="Rhea" id="RHEA:10532"/>
        <dbReference type="ChEBI" id="CHEBI:15377"/>
        <dbReference type="ChEBI" id="CHEBI:33384"/>
        <dbReference type="ChEBI" id="CHEBI:57912"/>
        <dbReference type="ChEBI" id="CHEBI:58866"/>
        <dbReference type="ChEBI" id="CHEBI:59776"/>
        <dbReference type="EC" id="4.2.1.20"/>
    </reaction>
</comment>
<comment type="cofactor">
    <cofactor evidence="1">
        <name>pyridoxal 5'-phosphate</name>
        <dbReference type="ChEBI" id="CHEBI:597326"/>
    </cofactor>
</comment>
<comment type="pathway">
    <text evidence="1">Amino-acid biosynthesis; L-tryptophan biosynthesis; L-tryptophan from chorismate: step 5/5.</text>
</comment>
<comment type="subunit">
    <text evidence="1">Tetramer of two alpha and two beta chains.</text>
</comment>
<comment type="similarity">
    <text evidence="1">Belongs to the TrpB family.</text>
</comment>
<sequence length="399" mass="43365">MKPYDLPDARGHFGPYGGVFVAETLMHALDELRAAYDQCRVDPSFIDEFNYELKHFVGRPSPVYHASRWSQRLGGAQIWFKREDLNHTGAHKVNNCIGQALLARRMGKPRVIAETGAGQHGVATATVAARYGMECVVFMGSEDVRRQASNVYRMKLLGATVVPVDSGSRTLKDALNEAMRDWVTNIENTFYIIGTVAGPDPYPRMVRDFQTVIGQECLTQMPEVIGRQPDYVVAAVGGGSNAMGIFHPYIPYENVRLIGVEAAGEGMETGRHAASLAAGQIGVLHGNRTYVMQNADGQVQETHSVSAGLDYPGVGPEHAWLKDSGRAEYAGITDDEALAAFHDCCRIEGIMPALESAHAIAQAVKMAPALSKDKVILVNLSGRGDKDMHTVAERAGLQL</sequence>
<reference key="1">
    <citation type="journal article" date="2003" name="Nat. Genet.">
        <title>Comparative analysis of the genome sequences of Bordetella pertussis, Bordetella parapertussis and Bordetella bronchiseptica.</title>
        <authorList>
            <person name="Parkhill J."/>
            <person name="Sebaihia M."/>
            <person name="Preston A."/>
            <person name="Murphy L.D."/>
            <person name="Thomson N.R."/>
            <person name="Harris D.E."/>
            <person name="Holden M.T.G."/>
            <person name="Churcher C.M."/>
            <person name="Bentley S.D."/>
            <person name="Mungall K.L."/>
            <person name="Cerdeno-Tarraga A.-M."/>
            <person name="Temple L."/>
            <person name="James K.D."/>
            <person name="Harris B."/>
            <person name="Quail M.A."/>
            <person name="Achtman M."/>
            <person name="Atkin R."/>
            <person name="Baker S."/>
            <person name="Basham D."/>
            <person name="Bason N."/>
            <person name="Cherevach I."/>
            <person name="Chillingworth T."/>
            <person name="Collins M."/>
            <person name="Cronin A."/>
            <person name="Davis P."/>
            <person name="Doggett J."/>
            <person name="Feltwell T."/>
            <person name="Goble A."/>
            <person name="Hamlin N."/>
            <person name="Hauser H."/>
            <person name="Holroyd S."/>
            <person name="Jagels K."/>
            <person name="Leather S."/>
            <person name="Moule S."/>
            <person name="Norberczak H."/>
            <person name="O'Neil S."/>
            <person name="Ormond D."/>
            <person name="Price C."/>
            <person name="Rabbinowitsch E."/>
            <person name="Rutter S."/>
            <person name="Sanders M."/>
            <person name="Saunders D."/>
            <person name="Seeger K."/>
            <person name="Sharp S."/>
            <person name="Simmonds M."/>
            <person name="Skelton J."/>
            <person name="Squares R."/>
            <person name="Squares S."/>
            <person name="Stevens K."/>
            <person name="Unwin L."/>
            <person name="Whitehead S."/>
            <person name="Barrell B.G."/>
            <person name="Maskell D.J."/>
        </authorList>
    </citation>
    <scope>NUCLEOTIDE SEQUENCE [LARGE SCALE GENOMIC DNA]</scope>
    <source>
        <strain>12822 / ATCC BAA-587 / NCTC 13253</strain>
    </source>
</reference>
<accession>Q7W5G8</accession>
<gene>
    <name evidence="1" type="primary">trpB</name>
    <name type="ordered locus">BPP3323</name>
</gene>
<name>TRPB_BORPA</name>
<keyword id="KW-0028">Amino-acid biosynthesis</keyword>
<keyword id="KW-0057">Aromatic amino acid biosynthesis</keyword>
<keyword id="KW-0456">Lyase</keyword>
<keyword id="KW-0663">Pyridoxal phosphate</keyword>
<keyword id="KW-0822">Tryptophan biosynthesis</keyword>
<organism>
    <name type="scientific">Bordetella parapertussis (strain 12822 / ATCC BAA-587 / NCTC 13253)</name>
    <dbReference type="NCBI Taxonomy" id="257311"/>
    <lineage>
        <taxon>Bacteria</taxon>
        <taxon>Pseudomonadati</taxon>
        <taxon>Pseudomonadota</taxon>
        <taxon>Betaproteobacteria</taxon>
        <taxon>Burkholderiales</taxon>
        <taxon>Alcaligenaceae</taxon>
        <taxon>Bordetella</taxon>
    </lineage>
</organism>
<protein>
    <recommendedName>
        <fullName evidence="1">Tryptophan synthase beta chain</fullName>
        <ecNumber evidence="1">4.2.1.20</ecNumber>
    </recommendedName>
</protein>
<proteinExistence type="inferred from homology"/>